<protein>
    <recommendedName>
        <fullName evidence="2">Small ribosomal subunit protein eS8y</fullName>
    </recommendedName>
    <alternativeName>
        <fullName>40S ribosomal protein S8-2</fullName>
    </alternativeName>
</protein>
<organism>
    <name type="scientific">Arabidopsis thaliana</name>
    <name type="common">Mouse-ear cress</name>
    <dbReference type="NCBI Taxonomy" id="3702"/>
    <lineage>
        <taxon>Eukaryota</taxon>
        <taxon>Viridiplantae</taxon>
        <taxon>Streptophyta</taxon>
        <taxon>Embryophyta</taxon>
        <taxon>Tracheophyta</taxon>
        <taxon>Spermatophyta</taxon>
        <taxon>Magnoliopsida</taxon>
        <taxon>eudicotyledons</taxon>
        <taxon>Gunneridae</taxon>
        <taxon>Pentapetalae</taxon>
        <taxon>rosids</taxon>
        <taxon>malvids</taxon>
        <taxon>Brassicales</taxon>
        <taxon>Brassicaceae</taxon>
        <taxon>Camelineae</taxon>
        <taxon>Arabidopsis</taxon>
    </lineage>
</organism>
<gene>
    <name type="primary">RPS8B</name>
    <name type="ordered locus">At5g59240</name>
    <name type="ORF">MNC17.15</name>
</gene>
<proteinExistence type="evidence at transcript level"/>
<reference key="1">
    <citation type="journal article" date="1998" name="DNA Res.">
        <title>Structural analysis of Arabidopsis thaliana chromosome 5. VIII. Sequence features of the regions of 1,081,958 bp covered by seventeen physically assigned P1 and TAC clones.</title>
        <authorList>
            <person name="Asamizu E."/>
            <person name="Sato S."/>
            <person name="Kaneko T."/>
            <person name="Nakamura Y."/>
            <person name="Kotani H."/>
            <person name="Miyajima N."/>
            <person name="Tabata S."/>
        </authorList>
    </citation>
    <scope>NUCLEOTIDE SEQUENCE [LARGE SCALE GENOMIC DNA]</scope>
    <source>
        <strain>cv. Columbia</strain>
    </source>
</reference>
<reference key="2">
    <citation type="journal article" date="2017" name="Plant J.">
        <title>Araport11: a complete reannotation of the Arabidopsis thaliana reference genome.</title>
        <authorList>
            <person name="Cheng C.Y."/>
            <person name="Krishnakumar V."/>
            <person name="Chan A.P."/>
            <person name="Thibaud-Nissen F."/>
            <person name="Schobel S."/>
            <person name="Town C.D."/>
        </authorList>
    </citation>
    <scope>GENOME REANNOTATION</scope>
    <source>
        <strain>cv. Columbia</strain>
    </source>
</reference>
<reference key="3">
    <citation type="journal article" date="2003" name="Science">
        <title>Empirical analysis of transcriptional activity in the Arabidopsis genome.</title>
        <authorList>
            <person name="Yamada K."/>
            <person name="Lim J."/>
            <person name="Dale J.M."/>
            <person name="Chen H."/>
            <person name="Shinn P."/>
            <person name="Palm C.J."/>
            <person name="Southwick A.M."/>
            <person name="Wu H.C."/>
            <person name="Kim C.J."/>
            <person name="Nguyen M."/>
            <person name="Pham P.K."/>
            <person name="Cheuk R.F."/>
            <person name="Karlin-Newmann G."/>
            <person name="Liu S.X."/>
            <person name="Lam B."/>
            <person name="Sakano H."/>
            <person name="Wu T."/>
            <person name="Yu G."/>
            <person name="Miranda M."/>
            <person name="Quach H.L."/>
            <person name="Tripp M."/>
            <person name="Chang C.H."/>
            <person name="Lee J.M."/>
            <person name="Toriumi M.J."/>
            <person name="Chan M.M."/>
            <person name="Tang C.C."/>
            <person name="Onodera C.S."/>
            <person name="Deng J.M."/>
            <person name="Akiyama K."/>
            <person name="Ansari Y."/>
            <person name="Arakawa T."/>
            <person name="Banh J."/>
            <person name="Banno F."/>
            <person name="Bowser L."/>
            <person name="Brooks S.Y."/>
            <person name="Carninci P."/>
            <person name="Chao Q."/>
            <person name="Choy N."/>
            <person name="Enju A."/>
            <person name="Goldsmith A.D."/>
            <person name="Gurjal M."/>
            <person name="Hansen N.F."/>
            <person name="Hayashizaki Y."/>
            <person name="Johnson-Hopson C."/>
            <person name="Hsuan V.W."/>
            <person name="Iida K."/>
            <person name="Karnes M."/>
            <person name="Khan S."/>
            <person name="Koesema E."/>
            <person name="Ishida J."/>
            <person name="Jiang P.X."/>
            <person name="Jones T."/>
            <person name="Kawai J."/>
            <person name="Kamiya A."/>
            <person name="Meyers C."/>
            <person name="Nakajima M."/>
            <person name="Narusaka M."/>
            <person name="Seki M."/>
            <person name="Sakurai T."/>
            <person name="Satou M."/>
            <person name="Tamse R."/>
            <person name="Vaysberg M."/>
            <person name="Wallender E.K."/>
            <person name="Wong C."/>
            <person name="Yamamura Y."/>
            <person name="Yuan S."/>
            <person name="Shinozaki K."/>
            <person name="Davis R.W."/>
            <person name="Theologis A."/>
            <person name="Ecker J.R."/>
        </authorList>
    </citation>
    <scope>NUCLEOTIDE SEQUENCE [LARGE SCALE MRNA]</scope>
    <source>
        <strain>cv. Columbia</strain>
    </source>
</reference>
<reference key="4">
    <citation type="journal article" date="2001" name="Plant Physiol.">
        <title>The organization of cytoplasmic ribosomal protein genes in the Arabidopsis genome.</title>
        <authorList>
            <person name="Barakat A."/>
            <person name="Szick-Miranda K."/>
            <person name="Chang I.-F."/>
            <person name="Guyot R."/>
            <person name="Blanc G."/>
            <person name="Cooke R."/>
            <person name="Delseny M."/>
            <person name="Bailey-Serres J."/>
        </authorList>
    </citation>
    <scope>GENE FAMILY ORGANIZATION</scope>
    <scope>NOMENCLATURE</scope>
</reference>
<reference key="5">
    <citation type="journal article" date="2023" name="Plant Cell">
        <title>An updated nomenclature for plant ribosomal protein genes.</title>
        <authorList>
            <person name="Scarpin M.R."/>
            <person name="Busche M."/>
            <person name="Martinez R.E."/>
            <person name="Harper L.C."/>
            <person name="Reiser L."/>
            <person name="Szakonyi D."/>
            <person name="Merchante C."/>
            <person name="Lan T."/>
            <person name="Xiong W."/>
            <person name="Mo B."/>
            <person name="Tang G."/>
            <person name="Chen X."/>
            <person name="Bailey-Serres J."/>
            <person name="Browning K.S."/>
            <person name="Brunkard J.O."/>
        </authorList>
    </citation>
    <scope>NOMENCLATURE</scope>
</reference>
<name>RS82_ARATH</name>
<feature type="chain" id="PRO_0000122251" description="Small ribosomal subunit protein eS8y">
    <location>
        <begin position="1"/>
        <end position="210"/>
    </location>
</feature>
<feature type="region of interest" description="Disordered" evidence="1">
    <location>
        <begin position="1"/>
        <end position="22"/>
    </location>
</feature>
<feature type="compositionally biased region" description="Basic residues" evidence="1">
    <location>
        <begin position="8"/>
        <end position="22"/>
    </location>
</feature>
<sequence length="210" mass="23773">MGISRDSIHKRRATGGKQKMWRKKRKYELGRQPANTKLSSNKTVRRIRVRGGNVKWRALRLDTGNFSWGSEAVTRKTRILDVAYNASNNELVRTQTLVKSAIVQVDAAPFKQGYLQHYGVDIGRKKKGEAVTTEEVKKSNHVQRKLEMRQEGRALDSHLEEQFSSGRLLACIASRPGQCGRADGYILEGKELEFYMKKLQKKKGKNAGAA</sequence>
<dbReference type="EMBL" id="AB016890">
    <property type="protein sequence ID" value="BAB09769.1"/>
    <property type="molecule type" value="Genomic_DNA"/>
</dbReference>
<dbReference type="EMBL" id="CP002688">
    <property type="protein sequence ID" value="AED97161.1"/>
    <property type="molecule type" value="Genomic_DNA"/>
</dbReference>
<dbReference type="EMBL" id="BT004603">
    <property type="protein sequence ID" value="AAO42849.1"/>
    <property type="molecule type" value="mRNA"/>
</dbReference>
<dbReference type="RefSeq" id="NP_200732.2">
    <property type="nucleotide sequence ID" value="NM_125314.5"/>
</dbReference>
<dbReference type="SMR" id="Q9FIF3"/>
<dbReference type="BioGRID" id="21286">
    <property type="interactions" value="161"/>
</dbReference>
<dbReference type="FunCoup" id="Q9FIF3">
    <property type="interactions" value="3022"/>
</dbReference>
<dbReference type="STRING" id="3702.Q9FIF3"/>
<dbReference type="iPTMnet" id="Q9FIF3"/>
<dbReference type="PaxDb" id="3702-AT5G59240.1"/>
<dbReference type="ProteomicsDB" id="228060"/>
<dbReference type="EnsemblPlants" id="AT5G59240.1">
    <property type="protein sequence ID" value="AT5G59240.1"/>
    <property type="gene ID" value="AT5G59240"/>
</dbReference>
<dbReference type="GeneID" id="836042"/>
<dbReference type="Gramene" id="AT5G59240.1">
    <property type="protein sequence ID" value="AT5G59240.1"/>
    <property type="gene ID" value="AT5G59240"/>
</dbReference>
<dbReference type="KEGG" id="ath:AT5G59240"/>
<dbReference type="Araport" id="AT5G59240"/>
<dbReference type="TAIR" id="AT5G59240"/>
<dbReference type="eggNOG" id="KOG3283">
    <property type="taxonomic scope" value="Eukaryota"/>
</dbReference>
<dbReference type="HOGENOM" id="CLU_080597_1_1_1"/>
<dbReference type="InParanoid" id="Q9FIF3"/>
<dbReference type="OMA" id="QRPHYRK"/>
<dbReference type="OrthoDB" id="1703270at2759"/>
<dbReference type="PhylomeDB" id="Q9FIF3"/>
<dbReference type="PRO" id="PR:Q9FIF3"/>
<dbReference type="Proteomes" id="UP000006548">
    <property type="component" value="Chromosome 5"/>
</dbReference>
<dbReference type="ExpressionAtlas" id="Q9FIF3">
    <property type="expression patterns" value="baseline and differential"/>
</dbReference>
<dbReference type="GO" id="GO:0022626">
    <property type="term" value="C:cytosolic ribosome"/>
    <property type="evidence" value="ECO:0007005"/>
    <property type="project" value="TAIR"/>
</dbReference>
<dbReference type="GO" id="GO:0022627">
    <property type="term" value="C:cytosolic small ribosomal subunit"/>
    <property type="evidence" value="ECO:0007005"/>
    <property type="project" value="TAIR"/>
</dbReference>
<dbReference type="GO" id="GO:0003735">
    <property type="term" value="F:structural constituent of ribosome"/>
    <property type="evidence" value="ECO:0000314"/>
    <property type="project" value="CAFA"/>
</dbReference>
<dbReference type="GO" id="GO:0006412">
    <property type="term" value="P:translation"/>
    <property type="evidence" value="ECO:0007669"/>
    <property type="project" value="InterPro"/>
</dbReference>
<dbReference type="CDD" id="cd11380">
    <property type="entry name" value="Ribosomal_S8e_like"/>
    <property type="match status" value="1"/>
</dbReference>
<dbReference type="FunFam" id="1.10.168.20:FF:000001">
    <property type="entry name" value="40S ribosomal protein S8"/>
    <property type="match status" value="1"/>
</dbReference>
<dbReference type="FunFam" id="3.10.290.70:FF:000003">
    <property type="entry name" value="40S ribosomal protein S8"/>
    <property type="match status" value="1"/>
</dbReference>
<dbReference type="Gene3D" id="3.10.290.70">
    <property type="match status" value="1"/>
</dbReference>
<dbReference type="Gene3D" id="1.10.168.20">
    <property type="entry name" value="Ribosomal protein S8e, subdomain"/>
    <property type="match status" value="1"/>
</dbReference>
<dbReference type="InterPro" id="IPR001047">
    <property type="entry name" value="Ribosomal_eS8"/>
</dbReference>
<dbReference type="InterPro" id="IPR018283">
    <property type="entry name" value="Ribosomal_eS8_CS"/>
</dbReference>
<dbReference type="InterPro" id="IPR042563">
    <property type="entry name" value="Ribosomal_protein_eS8_euk"/>
</dbReference>
<dbReference type="InterPro" id="IPR022309">
    <property type="entry name" value="Ribosomal_Se8/biogenesis_NSA2"/>
</dbReference>
<dbReference type="NCBIfam" id="TIGR00307">
    <property type="entry name" value="eS8"/>
    <property type="match status" value="1"/>
</dbReference>
<dbReference type="PANTHER" id="PTHR10394">
    <property type="entry name" value="40S RIBOSOMAL PROTEIN S8"/>
    <property type="match status" value="1"/>
</dbReference>
<dbReference type="Pfam" id="PF01201">
    <property type="entry name" value="Ribosomal_S8e"/>
    <property type="match status" value="1"/>
</dbReference>
<dbReference type="PROSITE" id="PS01193">
    <property type="entry name" value="RIBOSOMAL_S8E"/>
    <property type="match status" value="1"/>
</dbReference>
<comment type="similarity">
    <text evidence="3">Belongs to the eukaryotic ribosomal protein eS8 family.</text>
</comment>
<evidence type="ECO:0000256" key="1">
    <source>
        <dbReference type="SAM" id="MobiDB-lite"/>
    </source>
</evidence>
<evidence type="ECO:0000303" key="2">
    <source>
    </source>
</evidence>
<evidence type="ECO:0000305" key="3"/>
<accession>Q9FIF3</accession>
<keyword id="KW-1185">Reference proteome</keyword>
<keyword id="KW-0687">Ribonucleoprotein</keyword>
<keyword id="KW-0689">Ribosomal protein</keyword>